<organism>
    <name type="scientific">Shewanella sp. (strain ANA-3)</name>
    <dbReference type="NCBI Taxonomy" id="94122"/>
    <lineage>
        <taxon>Bacteria</taxon>
        <taxon>Pseudomonadati</taxon>
        <taxon>Pseudomonadota</taxon>
        <taxon>Gammaproteobacteria</taxon>
        <taxon>Alteromonadales</taxon>
        <taxon>Shewanellaceae</taxon>
        <taxon>Shewanella</taxon>
    </lineage>
</organism>
<proteinExistence type="inferred from homology"/>
<accession>A0KVP8</accession>
<sequence>MPMTMSQAFIGNFLGNSPKWYKIAILSFLIINPILFFYVSPFVAGWVLVLEFIFTLAMALKCYPLQPGGLLAIEAVAIGMTSASQVLHEIEANLEVLLLLVFMVAGIYFMKQLLLFVFTKMITKVRSKILVSLLFCLASAFLSAFLDALTVIAVIITVAVGFYSIYHKVASGKDFSADHDHTSEGKNDDGENQLNEDELESFRGFLRNLLMHAGVGTALGGVCTMVGEPQNLIIAAQANWQFGEFAIRMSPVTVPVLFAGILTCFIVEKFRWFGYGAQLPDAVHKILCDYAAYEDARRTNKDKMKLVIQAFVGVWLIAGLALHLASVGLIGLSVIILTTAFNGITDEHALGKAFEEALPFTALLAVFFAVVAVIIDQQLFGPVIQWALNHEGNTQLVIFYIANGLLSMVSDNVFVGTVYINEVKAALINGQITRDQFDLLAVAINTGTNLPSVATPNGQAAFLFLLTSALAPLIRLSYGRMVWMALPYTIVLSIVGVMAIQSGFLEQMTQYFYDSHAILHHSVKEALAPAAAH</sequence>
<name>NHAB_SHESA</name>
<reference key="1">
    <citation type="submission" date="2006-09" db="EMBL/GenBank/DDBJ databases">
        <title>Complete sequence of chromosome 1 of Shewanella sp. ANA-3.</title>
        <authorList>
            <person name="Copeland A."/>
            <person name="Lucas S."/>
            <person name="Lapidus A."/>
            <person name="Barry K."/>
            <person name="Detter J.C."/>
            <person name="Glavina del Rio T."/>
            <person name="Hammon N."/>
            <person name="Israni S."/>
            <person name="Dalin E."/>
            <person name="Tice H."/>
            <person name="Pitluck S."/>
            <person name="Chertkov O."/>
            <person name="Brettin T."/>
            <person name="Bruce D."/>
            <person name="Han C."/>
            <person name="Tapia R."/>
            <person name="Gilna P."/>
            <person name="Schmutz J."/>
            <person name="Larimer F."/>
            <person name="Land M."/>
            <person name="Hauser L."/>
            <person name="Kyrpides N."/>
            <person name="Kim E."/>
            <person name="Newman D."/>
            <person name="Salticov C."/>
            <person name="Konstantinidis K."/>
            <person name="Klappenback J."/>
            <person name="Tiedje J."/>
            <person name="Richardson P."/>
        </authorList>
    </citation>
    <scope>NUCLEOTIDE SEQUENCE [LARGE SCALE GENOMIC DNA]</scope>
    <source>
        <strain>ANA-3</strain>
    </source>
</reference>
<dbReference type="EMBL" id="CP000469">
    <property type="protein sequence ID" value="ABK47867.1"/>
    <property type="molecule type" value="Genomic_DNA"/>
</dbReference>
<dbReference type="RefSeq" id="WP_011716670.1">
    <property type="nucleotide sequence ID" value="NC_008577.1"/>
</dbReference>
<dbReference type="SMR" id="A0KVP8"/>
<dbReference type="STRING" id="94122.Shewana3_1634"/>
<dbReference type="GeneID" id="94727627"/>
<dbReference type="KEGG" id="shn:Shewana3_1634"/>
<dbReference type="eggNOG" id="COG3067">
    <property type="taxonomic scope" value="Bacteria"/>
</dbReference>
<dbReference type="HOGENOM" id="CLU_041110_0_0_6"/>
<dbReference type="OrthoDB" id="5288732at2"/>
<dbReference type="Proteomes" id="UP000002589">
    <property type="component" value="Chromosome"/>
</dbReference>
<dbReference type="GO" id="GO:0005886">
    <property type="term" value="C:plasma membrane"/>
    <property type="evidence" value="ECO:0007669"/>
    <property type="project" value="UniProtKB-SubCell"/>
</dbReference>
<dbReference type="GO" id="GO:0015385">
    <property type="term" value="F:sodium:proton antiporter activity"/>
    <property type="evidence" value="ECO:0007669"/>
    <property type="project" value="InterPro"/>
</dbReference>
<dbReference type="HAMAP" id="MF_01599">
    <property type="entry name" value="NhaB"/>
    <property type="match status" value="1"/>
</dbReference>
<dbReference type="InterPro" id="IPR004671">
    <property type="entry name" value="Na+/H+_antiporter_NhaB"/>
</dbReference>
<dbReference type="NCBIfam" id="TIGR00774">
    <property type="entry name" value="NhaB"/>
    <property type="match status" value="1"/>
</dbReference>
<dbReference type="NCBIfam" id="NF007093">
    <property type="entry name" value="PRK09547.1"/>
    <property type="match status" value="1"/>
</dbReference>
<dbReference type="PANTHER" id="PTHR43302:SF1">
    <property type="entry name" value="NA(+)_H(+) ANTIPORTER NHAB"/>
    <property type="match status" value="1"/>
</dbReference>
<dbReference type="PANTHER" id="PTHR43302">
    <property type="entry name" value="TRANSPORTER ARSB-RELATED"/>
    <property type="match status" value="1"/>
</dbReference>
<dbReference type="Pfam" id="PF06450">
    <property type="entry name" value="NhaB"/>
    <property type="match status" value="1"/>
</dbReference>
<protein>
    <recommendedName>
        <fullName evidence="1">Na(+)/H(+) antiporter NhaB</fullName>
    </recommendedName>
    <alternativeName>
        <fullName evidence="1">Sodium/proton antiporter NhaB</fullName>
    </alternativeName>
</protein>
<comment type="function">
    <text evidence="1">Na(+)/H(+) antiporter that extrudes sodium in exchange for external protons.</text>
</comment>
<comment type="catalytic activity">
    <reaction evidence="1">
        <text>2 Na(+)(in) + 3 H(+)(out) = 2 Na(+)(out) + 3 H(+)(in)</text>
        <dbReference type="Rhea" id="RHEA:29247"/>
        <dbReference type="ChEBI" id="CHEBI:15378"/>
        <dbReference type="ChEBI" id="CHEBI:29101"/>
    </reaction>
    <physiologicalReaction direction="left-to-right" evidence="1">
        <dbReference type="Rhea" id="RHEA:29248"/>
    </physiologicalReaction>
</comment>
<comment type="subcellular location">
    <subcellularLocation>
        <location evidence="1">Cell inner membrane</location>
        <topology evidence="1">Multi-pass membrane protein</topology>
    </subcellularLocation>
</comment>
<comment type="similarity">
    <text evidence="1">Belongs to the NhaB Na(+)/H(+) (TC 2.A.34) antiporter family.</text>
</comment>
<evidence type="ECO:0000255" key="1">
    <source>
        <dbReference type="HAMAP-Rule" id="MF_01599"/>
    </source>
</evidence>
<gene>
    <name evidence="1" type="primary">nhaB</name>
    <name type="ordered locus">Shewana3_1634</name>
</gene>
<keyword id="KW-0050">Antiport</keyword>
<keyword id="KW-0997">Cell inner membrane</keyword>
<keyword id="KW-1003">Cell membrane</keyword>
<keyword id="KW-0406">Ion transport</keyword>
<keyword id="KW-0472">Membrane</keyword>
<keyword id="KW-0915">Sodium</keyword>
<keyword id="KW-0739">Sodium transport</keyword>
<keyword id="KW-0812">Transmembrane</keyword>
<keyword id="KW-1133">Transmembrane helix</keyword>
<keyword id="KW-0813">Transport</keyword>
<feature type="chain" id="PRO_0000333135" description="Na(+)/H(+) antiporter NhaB">
    <location>
        <begin position="1"/>
        <end position="533"/>
    </location>
</feature>
<feature type="transmembrane region" description="Helical" evidence="1">
    <location>
        <begin position="10"/>
        <end position="30"/>
    </location>
</feature>
<feature type="transmembrane region" description="Helical" evidence="1">
    <location>
        <begin position="67"/>
        <end position="87"/>
    </location>
</feature>
<feature type="transmembrane region" description="Helical" evidence="1">
    <location>
        <begin position="98"/>
        <end position="118"/>
    </location>
</feature>
<feature type="transmembrane region" description="Helical" evidence="1">
    <location>
        <begin position="131"/>
        <end position="165"/>
    </location>
</feature>
<feature type="transmembrane region" description="Helical" evidence="1">
    <location>
        <begin position="209"/>
        <end position="229"/>
    </location>
</feature>
<feature type="transmembrane region" description="Helical" evidence="1">
    <location>
        <begin position="247"/>
        <end position="267"/>
    </location>
</feature>
<feature type="transmembrane region" description="Helical" evidence="1">
    <location>
        <begin position="310"/>
        <end position="330"/>
    </location>
</feature>
<feature type="transmembrane region" description="Helical" evidence="1">
    <location>
        <begin position="355"/>
        <end position="375"/>
    </location>
</feature>
<feature type="transmembrane region" description="Helical" evidence="1">
    <location>
        <begin position="396"/>
        <end position="416"/>
    </location>
</feature>
<feature type="transmembrane region" description="Helical" evidence="1">
    <location>
        <begin position="454"/>
        <end position="474"/>
    </location>
</feature>
<feature type="transmembrane region" description="Helical" evidence="1">
    <location>
        <begin position="481"/>
        <end position="501"/>
    </location>
</feature>